<keyword id="KW-0002">3D-structure</keyword>
<keyword id="KW-0150">Chloroplast</keyword>
<keyword id="KW-0464">Manganese</keyword>
<keyword id="KW-0472">Membrane</keyword>
<keyword id="KW-0602">Photosynthesis</keyword>
<keyword id="KW-0604">Photosystem II</keyword>
<keyword id="KW-0934">Plastid</keyword>
<keyword id="KW-0793">Thylakoid</keyword>
<keyword id="KW-0809">Transit peptide</keyword>
<feature type="transit peptide" description="Chloroplast" evidence="1">
    <location>
        <begin position="1"/>
        <end position="81"/>
    </location>
</feature>
<feature type="chain" id="PRO_0000029559" description="Oxygen-evolving enhancer protein 1, chloroplastic">
    <location>
        <begin position="82"/>
        <end position="329"/>
    </location>
</feature>
<feature type="region of interest" description="Disordered" evidence="2">
    <location>
        <begin position="258"/>
        <end position="281"/>
    </location>
</feature>
<feature type="helix" evidence="4">
    <location>
        <begin position="90"/>
        <end position="95"/>
    </location>
</feature>
<feature type="helix" evidence="4">
    <location>
        <begin position="98"/>
        <end position="101"/>
    </location>
</feature>
<feature type="turn" evidence="4">
    <location>
        <begin position="102"/>
        <end position="104"/>
    </location>
</feature>
<feature type="helix" evidence="4">
    <location>
        <begin position="106"/>
        <end position="108"/>
    </location>
</feature>
<feature type="strand" evidence="4">
    <location>
        <begin position="117"/>
        <end position="119"/>
    </location>
</feature>
<feature type="strand" evidence="4">
    <location>
        <begin position="124"/>
        <end position="142"/>
    </location>
</feature>
<feature type="strand" evidence="4">
    <location>
        <begin position="148"/>
        <end position="151"/>
    </location>
</feature>
<feature type="strand" evidence="4">
    <location>
        <begin position="154"/>
        <end position="156"/>
    </location>
</feature>
<feature type="strand" evidence="4">
    <location>
        <begin position="167"/>
        <end position="176"/>
    </location>
</feature>
<feature type="strand" evidence="4">
    <location>
        <begin position="182"/>
        <end position="185"/>
    </location>
</feature>
<feature type="strand" evidence="4">
    <location>
        <begin position="188"/>
        <end position="190"/>
    </location>
</feature>
<feature type="strand" evidence="4">
    <location>
        <begin position="192"/>
        <end position="198"/>
    </location>
</feature>
<feature type="strand" evidence="4">
    <location>
        <begin position="204"/>
        <end position="210"/>
    </location>
</feature>
<feature type="strand" evidence="4">
    <location>
        <begin position="212"/>
        <end position="219"/>
    </location>
</feature>
<feature type="strand" evidence="4">
    <location>
        <begin position="222"/>
        <end position="229"/>
    </location>
</feature>
<feature type="strand" evidence="4">
    <location>
        <begin position="245"/>
        <end position="251"/>
    </location>
</feature>
<feature type="helix" evidence="4">
    <location>
        <begin position="257"/>
        <end position="259"/>
    </location>
</feature>
<feature type="helix" evidence="4">
    <location>
        <begin position="264"/>
        <end position="266"/>
    </location>
</feature>
<feature type="helix" evidence="4">
    <location>
        <begin position="267"/>
        <end position="270"/>
    </location>
</feature>
<feature type="strand" evidence="4">
    <location>
        <begin position="277"/>
        <end position="289"/>
    </location>
</feature>
<feature type="turn" evidence="4">
    <location>
        <begin position="290"/>
        <end position="293"/>
    </location>
</feature>
<feature type="strand" evidence="4">
    <location>
        <begin position="294"/>
        <end position="304"/>
    </location>
</feature>
<feature type="turn" evidence="4">
    <location>
        <begin position="308"/>
        <end position="311"/>
    </location>
</feature>
<feature type="strand" evidence="4">
    <location>
        <begin position="316"/>
        <end position="328"/>
    </location>
</feature>
<proteinExistence type="evidence at protein level"/>
<evidence type="ECO:0000250" key="1"/>
<evidence type="ECO:0000256" key="2">
    <source>
        <dbReference type="SAM" id="MobiDB-lite"/>
    </source>
</evidence>
<evidence type="ECO:0000305" key="3"/>
<evidence type="ECO:0007829" key="4">
    <source>
        <dbReference type="PDB" id="5XNL"/>
    </source>
</evidence>
<dbReference type="EMBL" id="X15350">
    <property type="protein sequence ID" value="CAA33408.1"/>
    <property type="molecule type" value="mRNA"/>
</dbReference>
<dbReference type="EMBL" id="D13297">
    <property type="protein sequence ID" value="BAA02554.1"/>
    <property type="molecule type" value="mRNA"/>
</dbReference>
<dbReference type="PIR" id="S04132">
    <property type="entry name" value="S04132"/>
</dbReference>
<dbReference type="PDB" id="5XNL">
    <property type="method" value="EM"/>
    <property type="resolution" value="2.70 A"/>
    <property type="chains" value="O/o=82-329"/>
</dbReference>
<dbReference type="PDB" id="5XNM">
    <property type="method" value="EM"/>
    <property type="resolution" value="3.20 A"/>
    <property type="chains" value="O/o=82-329"/>
</dbReference>
<dbReference type="PDB" id="6YP7">
    <property type="method" value="EM"/>
    <property type="resolution" value="3.80 A"/>
    <property type="chains" value="O/o=82-329"/>
</dbReference>
<dbReference type="PDBsum" id="5XNL"/>
<dbReference type="PDBsum" id="5XNM"/>
<dbReference type="PDBsum" id="6YP7"/>
<dbReference type="EMDB" id="EMD-10865"/>
<dbReference type="EMDB" id="EMD-6741"/>
<dbReference type="EMDB" id="EMD-6742"/>
<dbReference type="SMR" id="P14226"/>
<dbReference type="IntAct" id="P14226">
    <property type="interactions" value="1"/>
</dbReference>
<dbReference type="MINT" id="P14226"/>
<dbReference type="EnsemblPlants" id="Psat4g089880.1">
    <property type="protein sequence ID" value="Psat4g089880.1.cds"/>
    <property type="gene ID" value="Psat4g089880"/>
</dbReference>
<dbReference type="Gramene" id="Psat4g089880.1">
    <property type="protein sequence ID" value="Psat4g089880.1.cds"/>
    <property type="gene ID" value="Psat4g089880"/>
</dbReference>
<dbReference type="OrthoDB" id="2860at2759"/>
<dbReference type="GO" id="GO:0009535">
    <property type="term" value="C:chloroplast thylakoid membrane"/>
    <property type="evidence" value="ECO:0007669"/>
    <property type="project" value="UniProtKB-SubCell"/>
</dbReference>
<dbReference type="GO" id="GO:0009654">
    <property type="term" value="C:photosystem II oxygen evolving complex"/>
    <property type="evidence" value="ECO:0007669"/>
    <property type="project" value="InterPro"/>
</dbReference>
<dbReference type="GO" id="GO:0010242">
    <property type="term" value="F:oxygen evolving activity"/>
    <property type="evidence" value="ECO:0007669"/>
    <property type="project" value="InterPro"/>
</dbReference>
<dbReference type="GO" id="GO:0010207">
    <property type="term" value="P:photosystem II assembly"/>
    <property type="evidence" value="ECO:0007669"/>
    <property type="project" value="InterPro"/>
</dbReference>
<dbReference type="GO" id="GO:0042549">
    <property type="term" value="P:photosystem II stabilization"/>
    <property type="evidence" value="ECO:0007669"/>
    <property type="project" value="InterPro"/>
</dbReference>
<dbReference type="FunFam" id="3.30.2050.10:FF:000001">
    <property type="entry name" value="Oxygen-evolving enhancer protein 1, chloroplastic"/>
    <property type="match status" value="1"/>
</dbReference>
<dbReference type="Gene3D" id="3.30.2050.10">
    <property type="entry name" value="photosynthetic oxygen evolving center domain"/>
    <property type="match status" value="1"/>
</dbReference>
<dbReference type="Gene3D" id="2.40.160.30">
    <property type="entry name" value="Photosystem II, cytochrome c-550 precursor"/>
    <property type="match status" value="1"/>
</dbReference>
<dbReference type="InterPro" id="IPR011250">
    <property type="entry name" value="OMP/PagP_b-brl"/>
</dbReference>
<dbReference type="InterPro" id="IPR002628">
    <property type="entry name" value="PsbO"/>
</dbReference>
<dbReference type="PANTHER" id="PTHR34058">
    <property type="entry name" value="OXYGEN-EVOLVING ENHANCER PROTEIN 1-2, CHLOROPLASTIC"/>
    <property type="match status" value="1"/>
</dbReference>
<dbReference type="Pfam" id="PF01716">
    <property type="entry name" value="MSP"/>
    <property type="match status" value="1"/>
</dbReference>
<dbReference type="SUPFAM" id="SSF56925">
    <property type="entry name" value="OMPA-like"/>
    <property type="match status" value="1"/>
</dbReference>
<accession>P14226</accession>
<reference key="1">
    <citation type="journal article" date="1989" name="Plant Mol. Biol.">
        <title>The extrinsic 33 kDa polypeptide of the oxygen-evolving complex of photosystem II is a putative calcium-binding protein and is encoded by a multi-gene family in pea.</title>
        <authorList>
            <person name="Wales R."/>
            <person name="Newman B.J."/>
            <person name="Pappin D."/>
            <person name="Gray J.C."/>
        </authorList>
    </citation>
    <scope>NUCLEOTIDE SEQUENCE [MRNA]</scope>
</reference>
<reference key="2">
    <citation type="submission" date="1992-09" db="EMBL/GenBank/DDBJ databases">
        <authorList>
            <person name="Watanabe A."/>
            <person name="Shinohara K."/>
            <person name="Murase M."/>
            <person name="Maruta Y."/>
            <person name="Konishi T."/>
        </authorList>
    </citation>
    <scope>NUCLEOTIDE SEQUENCE [MRNA]</scope>
</reference>
<organism>
    <name type="scientific">Pisum sativum</name>
    <name type="common">Garden pea</name>
    <name type="synonym">Lathyrus oleraceus</name>
    <dbReference type="NCBI Taxonomy" id="3888"/>
    <lineage>
        <taxon>Eukaryota</taxon>
        <taxon>Viridiplantae</taxon>
        <taxon>Streptophyta</taxon>
        <taxon>Embryophyta</taxon>
        <taxon>Tracheophyta</taxon>
        <taxon>Spermatophyta</taxon>
        <taxon>Magnoliopsida</taxon>
        <taxon>eudicotyledons</taxon>
        <taxon>Gunneridae</taxon>
        <taxon>Pentapetalae</taxon>
        <taxon>rosids</taxon>
        <taxon>fabids</taxon>
        <taxon>Fabales</taxon>
        <taxon>Fabaceae</taxon>
        <taxon>Papilionoideae</taxon>
        <taxon>50 kb inversion clade</taxon>
        <taxon>NPAAA clade</taxon>
        <taxon>Hologalegina</taxon>
        <taxon>IRL clade</taxon>
        <taxon>Fabeae</taxon>
        <taxon>Pisum</taxon>
    </lineage>
</organism>
<protein>
    <recommendedName>
        <fullName>Oxygen-evolving enhancer protein 1, chloroplastic</fullName>
        <shortName>OEE1</shortName>
    </recommendedName>
    <alternativeName>
        <fullName>33 kDa subunit of oxygen evolving system of photosystem II</fullName>
    </alternativeName>
    <alternativeName>
        <fullName>33 kDa thylakoid membrane protein</fullName>
    </alternativeName>
    <alternativeName>
        <fullName>OEC 33 kDa subunit</fullName>
    </alternativeName>
</protein>
<sequence>MAASLQAAATLMQPTKLRSNTLQLKSNQSVSKAFGLEHYGAKVTCSLQSDFKELAHKCVEASKIAGFALATSALVVSGASAEGAPKRLTFDEIQSKTYLEVKGTGTANQCPTIDGGVDSFSFKPGKYNAKKLCLEPTSFTVKSEGVTKNTPLAFQNTKLMTRLTYTLDEIEGPFEVSADGSVKFEEKDGIDYAAVTVQLPGGERVPFLFTIKQLVASGKPDSFSGEFLVPSYRGSSFLDPKGRGASTGYDNAVALPAGGRGDEEELGKENNKSAASSKGKITLSVTQTKPETGEVIGVFESIQPSDTDLGAKAPKDVKIQGVWYAQLES</sequence>
<name>PSBO_PEA</name>
<comment type="function">
    <text evidence="1">Stabilizes the manganese cluster which is the primary site of water splitting.</text>
</comment>
<comment type="subcellular location">
    <subcellularLocation>
        <location>Plastid</location>
        <location>Chloroplast thylakoid membrane</location>
    </subcellularLocation>
    <text>Associated with the photosystem II complex.</text>
</comment>
<comment type="similarity">
    <text evidence="3">Belongs to the PsbO family.</text>
</comment>
<gene>
    <name type="primary">PSBO</name>
</gene>